<geneLocation type="chloroplast"/>
<feature type="chain" id="PRO_0000306235" description="Photosystem II reaction center protein L">
    <location>
        <begin position="1"/>
        <end position="38"/>
    </location>
</feature>
<feature type="transmembrane region" description="Helical" evidence="1">
    <location>
        <begin position="17"/>
        <end position="37"/>
    </location>
</feature>
<gene>
    <name evidence="1" type="primary">psbL</name>
</gene>
<proteinExistence type="inferred from homology"/>
<protein>
    <recommendedName>
        <fullName evidence="1">Photosystem II reaction center protein L</fullName>
        <shortName evidence="1">PSII-L</shortName>
    </recommendedName>
</protein>
<sequence length="38" mass="4497">MTQSNPNEQNVELNRTSLYWGLLLIFVLAVLFSNYFFN</sequence>
<evidence type="ECO:0000255" key="1">
    <source>
        <dbReference type="HAMAP-Rule" id="MF_01317"/>
    </source>
</evidence>
<comment type="function">
    <text evidence="1">One of the components of the core complex of photosystem II (PSII). PSII is a light-driven water:plastoquinone oxidoreductase that uses light energy to abstract electrons from H(2)O, generating O(2) and a proton gradient subsequently used for ATP formation. It consists of a core antenna complex that captures photons, and an electron transfer chain that converts photonic excitation into a charge separation. This subunit is found at the monomer-monomer interface and is required for correct PSII assembly and/or dimerization.</text>
</comment>
<comment type="subunit">
    <text evidence="1">PSII is composed of 1 copy each of membrane proteins PsbA, PsbB, PsbC, PsbD, PsbE, PsbF, PsbH, PsbI, PsbJ, PsbK, PsbL, PsbM, PsbT, PsbX, PsbY, PsbZ, Psb30/Ycf12, at least 3 peripheral proteins of the oxygen-evolving complex and a large number of cofactors. It forms dimeric complexes.</text>
</comment>
<comment type="subcellular location">
    <subcellularLocation>
        <location evidence="1">Plastid</location>
        <location evidence="1">Chloroplast thylakoid membrane</location>
        <topology evidence="1">Single-pass membrane protein</topology>
    </subcellularLocation>
</comment>
<comment type="similarity">
    <text evidence="1">Belongs to the PsbL family.</text>
</comment>
<keyword id="KW-0150">Chloroplast</keyword>
<keyword id="KW-0472">Membrane</keyword>
<keyword id="KW-0602">Photosynthesis</keyword>
<keyword id="KW-0604">Photosystem II</keyword>
<keyword id="KW-0934">Plastid</keyword>
<keyword id="KW-0674">Reaction center</keyword>
<keyword id="KW-0793">Thylakoid</keyword>
<keyword id="KW-0812">Transmembrane</keyword>
<keyword id="KW-1133">Transmembrane helix</keyword>
<name>PSBL_LEPVR</name>
<accession>A4QLC1</accession>
<organism>
    <name type="scientific">Lepidium virginicum</name>
    <name type="common">Virginia pepperweed</name>
    <dbReference type="NCBI Taxonomy" id="59292"/>
    <lineage>
        <taxon>Eukaryota</taxon>
        <taxon>Viridiplantae</taxon>
        <taxon>Streptophyta</taxon>
        <taxon>Embryophyta</taxon>
        <taxon>Tracheophyta</taxon>
        <taxon>Spermatophyta</taxon>
        <taxon>Magnoliopsida</taxon>
        <taxon>eudicotyledons</taxon>
        <taxon>Gunneridae</taxon>
        <taxon>Pentapetalae</taxon>
        <taxon>rosids</taxon>
        <taxon>malvids</taxon>
        <taxon>Brassicales</taxon>
        <taxon>Brassicaceae</taxon>
        <taxon>Lepidieae</taxon>
        <taxon>Lepidium</taxon>
    </lineage>
</organism>
<reference key="1">
    <citation type="submission" date="2007-03" db="EMBL/GenBank/DDBJ databases">
        <title>Sequencing analysis of Lepidium virginicum JO26 chloroplast DNA.</title>
        <authorList>
            <person name="Hosouchi T."/>
            <person name="Tsuruoka H."/>
            <person name="Kotani H."/>
        </authorList>
    </citation>
    <scope>NUCLEOTIDE SEQUENCE [LARGE SCALE GENOMIC DNA]</scope>
</reference>
<dbReference type="EMBL" id="AP009374">
    <property type="protein sequence ID" value="BAF50476.1"/>
    <property type="molecule type" value="Genomic_DNA"/>
</dbReference>
<dbReference type="RefSeq" id="YP_001123652.1">
    <property type="nucleotide sequence ID" value="NC_009273.1"/>
</dbReference>
<dbReference type="SMR" id="A4QLC1"/>
<dbReference type="GeneID" id="4962002"/>
<dbReference type="GO" id="GO:0009535">
    <property type="term" value="C:chloroplast thylakoid membrane"/>
    <property type="evidence" value="ECO:0007669"/>
    <property type="project" value="UniProtKB-SubCell"/>
</dbReference>
<dbReference type="GO" id="GO:0009539">
    <property type="term" value="C:photosystem II reaction center"/>
    <property type="evidence" value="ECO:0007669"/>
    <property type="project" value="InterPro"/>
</dbReference>
<dbReference type="GO" id="GO:0015979">
    <property type="term" value="P:photosynthesis"/>
    <property type="evidence" value="ECO:0007669"/>
    <property type="project" value="UniProtKB-UniRule"/>
</dbReference>
<dbReference type="HAMAP" id="MF_01317">
    <property type="entry name" value="PSII_PsbL"/>
    <property type="match status" value="1"/>
</dbReference>
<dbReference type="InterPro" id="IPR003372">
    <property type="entry name" value="PSII_PsbL"/>
</dbReference>
<dbReference type="InterPro" id="IPR037266">
    <property type="entry name" value="PSII_PsbL_sf"/>
</dbReference>
<dbReference type="NCBIfam" id="NF001972">
    <property type="entry name" value="PRK00753.1"/>
    <property type="match status" value="1"/>
</dbReference>
<dbReference type="Pfam" id="PF02419">
    <property type="entry name" value="PsbL"/>
    <property type="match status" value="1"/>
</dbReference>
<dbReference type="SUPFAM" id="SSF161017">
    <property type="entry name" value="Photosystem II reaction center protein L, PsbL"/>
    <property type="match status" value="1"/>
</dbReference>